<evidence type="ECO:0000255" key="1">
    <source>
        <dbReference type="HAMAP-Rule" id="MF_00038"/>
    </source>
</evidence>
<dbReference type="EC" id="2.7.8.13" evidence="1"/>
<dbReference type="EMBL" id="CP000394">
    <property type="protein sequence ID" value="ABI61330.1"/>
    <property type="molecule type" value="Genomic_DNA"/>
</dbReference>
<dbReference type="RefSeq" id="WP_011631140.1">
    <property type="nucleotide sequence ID" value="NC_008343.2"/>
</dbReference>
<dbReference type="SMR" id="Q0BV22"/>
<dbReference type="STRING" id="391165.GbCGDNIH1_0432"/>
<dbReference type="KEGG" id="gbe:GbCGDNIH1_0432"/>
<dbReference type="eggNOG" id="COG0472">
    <property type="taxonomic scope" value="Bacteria"/>
</dbReference>
<dbReference type="HOGENOM" id="CLU_023982_0_0_5"/>
<dbReference type="OrthoDB" id="9805475at2"/>
<dbReference type="UniPathway" id="UPA00219"/>
<dbReference type="Proteomes" id="UP000001963">
    <property type="component" value="Chromosome"/>
</dbReference>
<dbReference type="GO" id="GO:0005886">
    <property type="term" value="C:plasma membrane"/>
    <property type="evidence" value="ECO:0007669"/>
    <property type="project" value="UniProtKB-SubCell"/>
</dbReference>
<dbReference type="GO" id="GO:0046872">
    <property type="term" value="F:metal ion binding"/>
    <property type="evidence" value="ECO:0007669"/>
    <property type="project" value="UniProtKB-KW"/>
</dbReference>
<dbReference type="GO" id="GO:0008963">
    <property type="term" value="F:phospho-N-acetylmuramoyl-pentapeptide-transferase activity"/>
    <property type="evidence" value="ECO:0007669"/>
    <property type="project" value="UniProtKB-UniRule"/>
</dbReference>
<dbReference type="GO" id="GO:0051992">
    <property type="term" value="F:UDP-N-acetylmuramoyl-L-alanyl-D-glutamyl-meso-2,6-diaminopimelyl-D-alanyl-D-alanine:undecaprenyl-phosphate transferase activity"/>
    <property type="evidence" value="ECO:0007669"/>
    <property type="project" value="RHEA"/>
</dbReference>
<dbReference type="GO" id="GO:0051301">
    <property type="term" value="P:cell division"/>
    <property type="evidence" value="ECO:0007669"/>
    <property type="project" value="UniProtKB-KW"/>
</dbReference>
<dbReference type="GO" id="GO:0071555">
    <property type="term" value="P:cell wall organization"/>
    <property type="evidence" value="ECO:0007669"/>
    <property type="project" value="UniProtKB-KW"/>
</dbReference>
<dbReference type="GO" id="GO:0009252">
    <property type="term" value="P:peptidoglycan biosynthetic process"/>
    <property type="evidence" value="ECO:0007669"/>
    <property type="project" value="UniProtKB-UniRule"/>
</dbReference>
<dbReference type="GO" id="GO:0008360">
    <property type="term" value="P:regulation of cell shape"/>
    <property type="evidence" value="ECO:0007669"/>
    <property type="project" value="UniProtKB-KW"/>
</dbReference>
<dbReference type="CDD" id="cd06852">
    <property type="entry name" value="GT_MraY"/>
    <property type="match status" value="1"/>
</dbReference>
<dbReference type="HAMAP" id="MF_00038">
    <property type="entry name" value="MraY"/>
    <property type="match status" value="1"/>
</dbReference>
<dbReference type="InterPro" id="IPR000715">
    <property type="entry name" value="Glycosyl_transferase_4"/>
</dbReference>
<dbReference type="InterPro" id="IPR003524">
    <property type="entry name" value="PNAcMuramoyl-5peptid_Trfase"/>
</dbReference>
<dbReference type="InterPro" id="IPR018480">
    <property type="entry name" value="PNAcMuramoyl-5peptid_Trfase_CS"/>
</dbReference>
<dbReference type="NCBIfam" id="TIGR00445">
    <property type="entry name" value="mraY"/>
    <property type="match status" value="1"/>
</dbReference>
<dbReference type="PANTHER" id="PTHR22926">
    <property type="entry name" value="PHOSPHO-N-ACETYLMURAMOYL-PENTAPEPTIDE-TRANSFERASE"/>
    <property type="match status" value="1"/>
</dbReference>
<dbReference type="PANTHER" id="PTHR22926:SF5">
    <property type="entry name" value="PHOSPHO-N-ACETYLMURAMOYL-PENTAPEPTIDE-TRANSFERASE HOMOLOG"/>
    <property type="match status" value="1"/>
</dbReference>
<dbReference type="Pfam" id="PF00953">
    <property type="entry name" value="Glycos_transf_4"/>
    <property type="match status" value="1"/>
</dbReference>
<dbReference type="Pfam" id="PF10555">
    <property type="entry name" value="MraY_sig1"/>
    <property type="match status" value="1"/>
</dbReference>
<dbReference type="PROSITE" id="PS01347">
    <property type="entry name" value="MRAY_1"/>
    <property type="match status" value="1"/>
</dbReference>
<dbReference type="PROSITE" id="PS01348">
    <property type="entry name" value="MRAY_2"/>
    <property type="match status" value="1"/>
</dbReference>
<proteinExistence type="inferred from homology"/>
<keyword id="KW-0131">Cell cycle</keyword>
<keyword id="KW-0132">Cell division</keyword>
<keyword id="KW-0997">Cell inner membrane</keyword>
<keyword id="KW-1003">Cell membrane</keyword>
<keyword id="KW-0133">Cell shape</keyword>
<keyword id="KW-0961">Cell wall biogenesis/degradation</keyword>
<keyword id="KW-0460">Magnesium</keyword>
<keyword id="KW-0472">Membrane</keyword>
<keyword id="KW-0479">Metal-binding</keyword>
<keyword id="KW-0573">Peptidoglycan synthesis</keyword>
<keyword id="KW-1185">Reference proteome</keyword>
<keyword id="KW-0808">Transferase</keyword>
<keyword id="KW-0812">Transmembrane</keyword>
<keyword id="KW-1133">Transmembrane helix</keyword>
<protein>
    <recommendedName>
        <fullName evidence="1">Phospho-N-acetylmuramoyl-pentapeptide-transferase</fullName>
        <ecNumber evidence="1">2.7.8.13</ecNumber>
    </recommendedName>
    <alternativeName>
        <fullName evidence="1">UDP-MurNAc-pentapeptide phosphotransferase</fullName>
    </alternativeName>
</protein>
<comment type="function">
    <text evidence="1">Catalyzes the initial step of the lipid cycle reactions in the biosynthesis of the cell wall peptidoglycan: transfers peptidoglycan precursor phospho-MurNAc-pentapeptide from UDP-MurNAc-pentapeptide onto the lipid carrier undecaprenyl phosphate, yielding undecaprenyl-pyrophosphoryl-MurNAc-pentapeptide, known as lipid I.</text>
</comment>
<comment type="catalytic activity">
    <reaction evidence="1">
        <text>UDP-N-acetyl-alpha-D-muramoyl-L-alanyl-gamma-D-glutamyl-meso-2,6-diaminopimeloyl-D-alanyl-D-alanine + di-trans,octa-cis-undecaprenyl phosphate = di-trans,octa-cis-undecaprenyl diphospho-N-acetyl-alpha-D-muramoyl-L-alanyl-D-glutamyl-meso-2,6-diaminopimeloyl-D-alanyl-D-alanine + UMP</text>
        <dbReference type="Rhea" id="RHEA:28386"/>
        <dbReference type="ChEBI" id="CHEBI:57865"/>
        <dbReference type="ChEBI" id="CHEBI:60392"/>
        <dbReference type="ChEBI" id="CHEBI:61386"/>
        <dbReference type="ChEBI" id="CHEBI:61387"/>
        <dbReference type="EC" id="2.7.8.13"/>
    </reaction>
</comment>
<comment type="cofactor">
    <cofactor evidence="1">
        <name>Mg(2+)</name>
        <dbReference type="ChEBI" id="CHEBI:18420"/>
    </cofactor>
</comment>
<comment type="pathway">
    <text evidence="1">Cell wall biogenesis; peptidoglycan biosynthesis.</text>
</comment>
<comment type="subcellular location">
    <subcellularLocation>
        <location evidence="1">Cell inner membrane</location>
        <topology evidence="1">Multi-pass membrane protein</topology>
    </subcellularLocation>
</comment>
<comment type="similarity">
    <text evidence="1">Belongs to the glycosyltransferase 4 family. MraY subfamily.</text>
</comment>
<accession>Q0BV22</accession>
<name>MRAY_GRABC</name>
<reference key="1">
    <citation type="journal article" date="2007" name="J. Bacteriol.">
        <title>Genome sequence analysis of the emerging human pathogenic acetic acid bacterium Granulibacter bethesdensis.</title>
        <authorList>
            <person name="Greenberg D.E."/>
            <person name="Porcella S.F."/>
            <person name="Zelazny A.M."/>
            <person name="Virtaneva K."/>
            <person name="Sturdevant D.E."/>
            <person name="Kupko J.J. III"/>
            <person name="Barbian K.D."/>
            <person name="Babar A."/>
            <person name="Dorward D.W."/>
            <person name="Holland S.M."/>
        </authorList>
    </citation>
    <scope>NUCLEOTIDE SEQUENCE [LARGE SCALE GENOMIC DNA]</scope>
    <source>
        <strain>ATCC BAA-1260 / CGDNIH1</strain>
    </source>
</reference>
<sequence length="362" mass="38973">MLYDLAHPLAEQFFLFNLFRYITFRSGAACMTALIVSFLLGPALIRWLKSVQRGGQPIREDGPERHLLEKKGTPTMGGVLILAATGISTLLWTDLRNGYVWAVLLLTLGYGGIGFADDYLKLSKRNTKGLPGRVKLIGQAVIGLIAAIWIMSLTRDPLSTGLAIPLLKDVLIPLGFAFPLFGMLVAMGASNAVNLTDGLDGLAIVPTIIAAGVFALIAYLVGNHVFATYLQLNEVAGTGELTVFCSALIGAGLGFLWFNAPPARVFMGDTGSLALGGALGGVAIATKHEIVLAIVGGLFVVETISVIVQVFWYKRTGRRVFLMAPLHHHFEKKGWPESTIVIRFWIVSFILALAGLATLKIR</sequence>
<organism>
    <name type="scientific">Granulibacter bethesdensis (strain ATCC BAA-1260 / CGDNIH1)</name>
    <dbReference type="NCBI Taxonomy" id="391165"/>
    <lineage>
        <taxon>Bacteria</taxon>
        <taxon>Pseudomonadati</taxon>
        <taxon>Pseudomonadota</taxon>
        <taxon>Alphaproteobacteria</taxon>
        <taxon>Acetobacterales</taxon>
        <taxon>Acetobacteraceae</taxon>
        <taxon>Granulibacter</taxon>
    </lineage>
</organism>
<gene>
    <name evidence="1" type="primary">mraY</name>
    <name type="ordered locus">GbCGDNIH1_0432</name>
</gene>
<feature type="chain" id="PRO_0000332536" description="Phospho-N-acetylmuramoyl-pentapeptide-transferase">
    <location>
        <begin position="1"/>
        <end position="362"/>
    </location>
</feature>
<feature type="transmembrane region" description="Helical" evidence="1">
    <location>
        <begin position="28"/>
        <end position="48"/>
    </location>
</feature>
<feature type="transmembrane region" description="Helical" evidence="1">
    <location>
        <begin position="72"/>
        <end position="92"/>
    </location>
</feature>
<feature type="transmembrane region" description="Helical" evidence="1">
    <location>
        <begin position="100"/>
        <end position="120"/>
    </location>
</feature>
<feature type="transmembrane region" description="Helical" evidence="1">
    <location>
        <begin position="134"/>
        <end position="154"/>
    </location>
</feature>
<feature type="transmembrane region" description="Helical" evidence="1">
    <location>
        <begin position="170"/>
        <end position="190"/>
    </location>
</feature>
<feature type="transmembrane region" description="Helical" evidence="1">
    <location>
        <begin position="201"/>
        <end position="221"/>
    </location>
</feature>
<feature type="transmembrane region" description="Helical" evidence="1">
    <location>
        <begin position="241"/>
        <end position="261"/>
    </location>
</feature>
<feature type="transmembrane region" description="Helical" evidence="1">
    <location>
        <begin position="265"/>
        <end position="285"/>
    </location>
</feature>
<feature type="transmembrane region" description="Helical" evidence="1">
    <location>
        <begin position="290"/>
        <end position="310"/>
    </location>
</feature>
<feature type="transmembrane region" description="Helical" evidence="1">
    <location>
        <begin position="339"/>
        <end position="359"/>
    </location>
</feature>